<sequence length="348" mass="39664">MKNLLGCSVKDLEKIALNYGQAAFRGRQIYNWLYNYKNRSKSIDEINVLPLKFRDQLKNEAFLFGELTLKEKYLATDGTLKLLLNTRDNESVECVGIPTEKRLTACLSSQVGCPMDCKFCATGKEGLKRSLKVSEILDQILFIENQMNQKVSNIVFMGMGEPLLNIDELLLSIRSINEDFAISQRKITVSTVAIPKMISKLSELSFQVLGKCQFTLAISLHASNQKIREAIIPSAKNYHIKNIIDDCREYVRETGRRVSFEYLMLHGVNDKLEHADELSNLIKGFQCHVNLIQYNHIEEVEFKQTPIKNAQLFQTRLSNSGINVSFRKSRGSDRNAACGQLRQNDKIK</sequence>
<name>RLMN_PROMP</name>
<feature type="chain" id="PRO_0000350323" description="Probable dual-specificity RNA methyltransferase RlmN">
    <location>
        <begin position="1"/>
        <end position="348"/>
    </location>
</feature>
<feature type="domain" description="Radical SAM core" evidence="2">
    <location>
        <begin position="99"/>
        <end position="323"/>
    </location>
</feature>
<feature type="active site" description="Proton acceptor" evidence="1">
    <location>
        <position position="93"/>
    </location>
</feature>
<feature type="active site" description="S-methylcysteine intermediate" evidence="1">
    <location>
        <position position="338"/>
    </location>
</feature>
<feature type="binding site" evidence="1">
    <location>
        <position position="113"/>
    </location>
    <ligand>
        <name>[4Fe-4S] cluster</name>
        <dbReference type="ChEBI" id="CHEBI:49883"/>
        <note>4Fe-4S-S-AdoMet</note>
    </ligand>
</feature>
<feature type="binding site" evidence="1">
    <location>
        <position position="117"/>
    </location>
    <ligand>
        <name>[4Fe-4S] cluster</name>
        <dbReference type="ChEBI" id="CHEBI:49883"/>
        <note>4Fe-4S-S-AdoMet</note>
    </ligand>
</feature>
<feature type="binding site" evidence="1">
    <location>
        <position position="120"/>
    </location>
    <ligand>
        <name>[4Fe-4S] cluster</name>
        <dbReference type="ChEBI" id="CHEBI:49883"/>
        <note>4Fe-4S-S-AdoMet</note>
    </ligand>
</feature>
<feature type="binding site" evidence="1">
    <location>
        <begin position="160"/>
        <end position="161"/>
    </location>
    <ligand>
        <name>S-adenosyl-L-methionine</name>
        <dbReference type="ChEBI" id="CHEBI:59789"/>
    </ligand>
</feature>
<feature type="binding site" evidence="1">
    <location>
        <position position="190"/>
    </location>
    <ligand>
        <name>S-adenosyl-L-methionine</name>
        <dbReference type="ChEBI" id="CHEBI:59789"/>
    </ligand>
</feature>
<feature type="binding site" evidence="1">
    <location>
        <begin position="219"/>
        <end position="221"/>
    </location>
    <ligand>
        <name>S-adenosyl-L-methionine</name>
        <dbReference type="ChEBI" id="CHEBI:59789"/>
    </ligand>
</feature>
<feature type="binding site" evidence="1">
    <location>
        <position position="295"/>
    </location>
    <ligand>
        <name>S-adenosyl-L-methionine</name>
        <dbReference type="ChEBI" id="CHEBI:59789"/>
    </ligand>
</feature>
<feature type="disulfide bond" description="(transient)" evidence="1">
    <location>
        <begin position="106"/>
        <end position="338"/>
    </location>
</feature>
<accession>Q7V010</accession>
<organism>
    <name type="scientific">Prochlorococcus marinus subsp. pastoris (strain CCMP1986 / NIES-2087 / MED4)</name>
    <dbReference type="NCBI Taxonomy" id="59919"/>
    <lineage>
        <taxon>Bacteria</taxon>
        <taxon>Bacillati</taxon>
        <taxon>Cyanobacteriota</taxon>
        <taxon>Cyanophyceae</taxon>
        <taxon>Synechococcales</taxon>
        <taxon>Prochlorococcaceae</taxon>
        <taxon>Prochlorococcus</taxon>
    </lineage>
</organism>
<comment type="function">
    <text evidence="1">Specifically methylates position 2 of adenine 2503 in 23S rRNA and position 2 of adenine 37 in tRNAs.</text>
</comment>
<comment type="catalytic activity">
    <reaction evidence="1">
        <text>adenosine(2503) in 23S rRNA + 2 reduced [2Fe-2S]-[ferredoxin] + 2 S-adenosyl-L-methionine = 2-methyladenosine(2503) in 23S rRNA + 5'-deoxyadenosine + L-methionine + 2 oxidized [2Fe-2S]-[ferredoxin] + S-adenosyl-L-homocysteine</text>
        <dbReference type="Rhea" id="RHEA:42916"/>
        <dbReference type="Rhea" id="RHEA-COMP:10000"/>
        <dbReference type="Rhea" id="RHEA-COMP:10001"/>
        <dbReference type="Rhea" id="RHEA-COMP:10152"/>
        <dbReference type="Rhea" id="RHEA-COMP:10282"/>
        <dbReference type="ChEBI" id="CHEBI:17319"/>
        <dbReference type="ChEBI" id="CHEBI:33737"/>
        <dbReference type="ChEBI" id="CHEBI:33738"/>
        <dbReference type="ChEBI" id="CHEBI:57844"/>
        <dbReference type="ChEBI" id="CHEBI:57856"/>
        <dbReference type="ChEBI" id="CHEBI:59789"/>
        <dbReference type="ChEBI" id="CHEBI:74411"/>
        <dbReference type="ChEBI" id="CHEBI:74497"/>
        <dbReference type="EC" id="2.1.1.192"/>
    </reaction>
</comment>
<comment type="catalytic activity">
    <reaction evidence="1">
        <text>adenosine(37) in tRNA + 2 reduced [2Fe-2S]-[ferredoxin] + 2 S-adenosyl-L-methionine = 2-methyladenosine(37) in tRNA + 5'-deoxyadenosine + L-methionine + 2 oxidized [2Fe-2S]-[ferredoxin] + S-adenosyl-L-homocysteine</text>
        <dbReference type="Rhea" id="RHEA:43332"/>
        <dbReference type="Rhea" id="RHEA-COMP:10000"/>
        <dbReference type="Rhea" id="RHEA-COMP:10001"/>
        <dbReference type="Rhea" id="RHEA-COMP:10162"/>
        <dbReference type="Rhea" id="RHEA-COMP:10485"/>
        <dbReference type="ChEBI" id="CHEBI:17319"/>
        <dbReference type="ChEBI" id="CHEBI:33737"/>
        <dbReference type="ChEBI" id="CHEBI:33738"/>
        <dbReference type="ChEBI" id="CHEBI:57844"/>
        <dbReference type="ChEBI" id="CHEBI:57856"/>
        <dbReference type="ChEBI" id="CHEBI:59789"/>
        <dbReference type="ChEBI" id="CHEBI:74411"/>
        <dbReference type="ChEBI" id="CHEBI:74497"/>
        <dbReference type="EC" id="2.1.1.192"/>
    </reaction>
</comment>
<comment type="cofactor">
    <cofactor evidence="1">
        <name>[4Fe-4S] cluster</name>
        <dbReference type="ChEBI" id="CHEBI:49883"/>
    </cofactor>
    <text evidence="1">Binds 1 [4Fe-4S] cluster. The cluster is coordinated with 3 cysteines and an exchangeable S-adenosyl-L-methionine.</text>
</comment>
<comment type="subcellular location">
    <subcellularLocation>
        <location evidence="1">Cytoplasm</location>
    </subcellularLocation>
</comment>
<comment type="miscellaneous">
    <text evidence="1">Reaction proceeds by a ping-pong mechanism involving intermediate methylation of a conserved cysteine residue.</text>
</comment>
<comment type="similarity">
    <text evidence="1">Belongs to the radical SAM superfamily. RlmN family.</text>
</comment>
<evidence type="ECO:0000255" key="1">
    <source>
        <dbReference type="HAMAP-Rule" id="MF_01849"/>
    </source>
</evidence>
<evidence type="ECO:0000255" key="2">
    <source>
        <dbReference type="PROSITE-ProRule" id="PRU01266"/>
    </source>
</evidence>
<proteinExistence type="inferred from homology"/>
<reference key="1">
    <citation type="journal article" date="2003" name="Nature">
        <title>Genome divergence in two Prochlorococcus ecotypes reflects oceanic niche differentiation.</title>
        <authorList>
            <person name="Rocap G."/>
            <person name="Larimer F.W."/>
            <person name="Lamerdin J.E."/>
            <person name="Malfatti S."/>
            <person name="Chain P."/>
            <person name="Ahlgren N.A."/>
            <person name="Arellano A."/>
            <person name="Coleman M."/>
            <person name="Hauser L."/>
            <person name="Hess W.R."/>
            <person name="Johnson Z.I."/>
            <person name="Land M.L."/>
            <person name="Lindell D."/>
            <person name="Post A.F."/>
            <person name="Regala W."/>
            <person name="Shah M."/>
            <person name="Shaw S.L."/>
            <person name="Steglich C."/>
            <person name="Sullivan M.B."/>
            <person name="Ting C.S."/>
            <person name="Tolonen A."/>
            <person name="Webb E.A."/>
            <person name="Zinser E.R."/>
            <person name="Chisholm S.W."/>
        </authorList>
    </citation>
    <scope>NUCLEOTIDE SEQUENCE [LARGE SCALE GENOMIC DNA]</scope>
    <source>
        <strain>CCMP1986 / NIES-2087 / MED4</strain>
    </source>
</reference>
<dbReference type="EC" id="2.1.1.192" evidence="1"/>
<dbReference type="EMBL" id="BX548174">
    <property type="protein sequence ID" value="CAE19940.1"/>
    <property type="molecule type" value="Genomic_DNA"/>
</dbReference>
<dbReference type="RefSeq" id="WP_011133109.1">
    <property type="nucleotide sequence ID" value="NC_005072.1"/>
</dbReference>
<dbReference type="SMR" id="Q7V010"/>
<dbReference type="STRING" id="59919.PMM1481"/>
<dbReference type="KEGG" id="pmm:PMM1481"/>
<dbReference type="eggNOG" id="COG0820">
    <property type="taxonomic scope" value="Bacteria"/>
</dbReference>
<dbReference type="HOGENOM" id="CLU_029101_1_1_3"/>
<dbReference type="OrthoDB" id="9793973at2"/>
<dbReference type="Proteomes" id="UP000001026">
    <property type="component" value="Chromosome"/>
</dbReference>
<dbReference type="GO" id="GO:0005737">
    <property type="term" value="C:cytoplasm"/>
    <property type="evidence" value="ECO:0007669"/>
    <property type="project" value="UniProtKB-SubCell"/>
</dbReference>
<dbReference type="GO" id="GO:0051539">
    <property type="term" value="F:4 iron, 4 sulfur cluster binding"/>
    <property type="evidence" value="ECO:0007669"/>
    <property type="project" value="UniProtKB-UniRule"/>
</dbReference>
<dbReference type="GO" id="GO:0046872">
    <property type="term" value="F:metal ion binding"/>
    <property type="evidence" value="ECO:0007669"/>
    <property type="project" value="UniProtKB-KW"/>
</dbReference>
<dbReference type="GO" id="GO:0070040">
    <property type="term" value="F:rRNA (adenine(2503)-C2-)-methyltransferase activity"/>
    <property type="evidence" value="ECO:0007669"/>
    <property type="project" value="UniProtKB-UniRule"/>
</dbReference>
<dbReference type="GO" id="GO:0019843">
    <property type="term" value="F:rRNA binding"/>
    <property type="evidence" value="ECO:0007669"/>
    <property type="project" value="UniProtKB-UniRule"/>
</dbReference>
<dbReference type="GO" id="GO:0002935">
    <property type="term" value="F:tRNA (adenine(37)-C2)-methyltransferase activity"/>
    <property type="evidence" value="ECO:0007669"/>
    <property type="project" value="UniProtKB-UniRule"/>
</dbReference>
<dbReference type="GO" id="GO:0000049">
    <property type="term" value="F:tRNA binding"/>
    <property type="evidence" value="ECO:0007669"/>
    <property type="project" value="UniProtKB-UniRule"/>
</dbReference>
<dbReference type="GO" id="GO:0070475">
    <property type="term" value="P:rRNA base methylation"/>
    <property type="evidence" value="ECO:0007669"/>
    <property type="project" value="UniProtKB-UniRule"/>
</dbReference>
<dbReference type="GO" id="GO:0030488">
    <property type="term" value="P:tRNA methylation"/>
    <property type="evidence" value="ECO:0007669"/>
    <property type="project" value="UniProtKB-UniRule"/>
</dbReference>
<dbReference type="CDD" id="cd01335">
    <property type="entry name" value="Radical_SAM"/>
    <property type="match status" value="1"/>
</dbReference>
<dbReference type="FunFam" id="3.20.20.70:FF:000014">
    <property type="entry name" value="Probable dual-specificity RNA methyltransferase RlmN"/>
    <property type="match status" value="1"/>
</dbReference>
<dbReference type="Gene3D" id="1.10.150.530">
    <property type="match status" value="1"/>
</dbReference>
<dbReference type="Gene3D" id="3.20.20.70">
    <property type="entry name" value="Aldolase class I"/>
    <property type="match status" value="1"/>
</dbReference>
<dbReference type="HAMAP" id="MF_01849">
    <property type="entry name" value="RNA_methyltr_RlmN"/>
    <property type="match status" value="1"/>
</dbReference>
<dbReference type="InterPro" id="IPR013785">
    <property type="entry name" value="Aldolase_TIM"/>
</dbReference>
<dbReference type="InterPro" id="IPR006638">
    <property type="entry name" value="Elp3/MiaA/NifB-like_rSAM"/>
</dbReference>
<dbReference type="InterPro" id="IPR040072">
    <property type="entry name" value="Methyltransferase_A"/>
</dbReference>
<dbReference type="InterPro" id="IPR048641">
    <property type="entry name" value="RlmN_N"/>
</dbReference>
<dbReference type="InterPro" id="IPR027492">
    <property type="entry name" value="RNA_MTrfase_RlmN"/>
</dbReference>
<dbReference type="InterPro" id="IPR004383">
    <property type="entry name" value="rRNA_lsu_MTrfase_RlmN/Cfr"/>
</dbReference>
<dbReference type="InterPro" id="IPR007197">
    <property type="entry name" value="rSAM"/>
</dbReference>
<dbReference type="NCBIfam" id="TIGR00048">
    <property type="entry name" value="rRNA_mod_RlmN"/>
    <property type="match status" value="1"/>
</dbReference>
<dbReference type="PANTHER" id="PTHR30544">
    <property type="entry name" value="23S RRNA METHYLTRANSFERASE"/>
    <property type="match status" value="1"/>
</dbReference>
<dbReference type="PANTHER" id="PTHR30544:SF5">
    <property type="entry name" value="RADICAL SAM CORE DOMAIN-CONTAINING PROTEIN"/>
    <property type="match status" value="1"/>
</dbReference>
<dbReference type="Pfam" id="PF13353">
    <property type="entry name" value="Fer4_12"/>
    <property type="match status" value="1"/>
</dbReference>
<dbReference type="Pfam" id="PF04055">
    <property type="entry name" value="Radical_SAM"/>
    <property type="match status" value="1"/>
</dbReference>
<dbReference type="Pfam" id="PF21016">
    <property type="entry name" value="RlmN_N"/>
    <property type="match status" value="1"/>
</dbReference>
<dbReference type="PIRSF" id="PIRSF006004">
    <property type="entry name" value="CHP00048"/>
    <property type="match status" value="1"/>
</dbReference>
<dbReference type="SFLD" id="SFLDF00275">
    <property type="entry name" value="adenosine_C2_methyltransferase"/>
    <property type="match status" value="1"/>
</dbReference>
<dbReference type="SFLD" id="SFLDS00029">
    <property type="entry name" value="Radical_SAM"/>
    <property type="match status" value="1"/>
</dbReference>
<dbReference type="SMART" id="SM00729">
    <property type="entry name" value="Elp3"/>
    <property type="match status" value="1"/>
</dbReference>
<dbReference type="SUPFAM" id="SSF102114">
    <property type="entry name" value="Radical SAM enzymes"/>
    <property type="match status" value="1"/>
</dbReference>
<dbReference type="PROSITE" id="PS51918">
    <property type="entry name" value="RADICAL_SAM"/>
    <property type="match status" value="1"/>
</dbReference>
<gene>
    <name evidence="1" type="primary">rlmN</name>
    <name type="ordered locus">PMM1481</name>
</gene>
<keyword id="KW-0004">4Fe-4S</keyword>
<keyword id="KW-0963">Cytoplasm</keyword>
<keyword id="KW-1015">Disulfide bond</keyword>
<keyword id="KW-0408">Iron</keyword>
<keyword id="KW-0411">Iron-sulfur</keyword>
<keyword id="KW-0479">Metal-binding</keyword>
<keyword id="KW-0489">Methyltransferase</keyword>
<keyword id="KW-0698">rRNA processing</keyword>
<keyword id="KW-0949">S-adenosyl-L-methionine</keyword>
<keyword id="KW-0808">Transferase</keyword>
<keyword id="KW-0819">tRNA processing</keyword>
<protein>
    <recommendedName>
        <fullName evidence="1">Probable dual-specificity RNA methyltransferase RlmN</fullName>
        <ecNumber evidence="1">2.1.1.192</ecNumber>
    </recommendedName>
    <alternativeName>
        <fullName evidence="1">23S rRNA (adenine(2503)-C(2))-methyltransferase</fullName>
    </alternativeName>
    <alternativeName>
        <fullName evidence="1">23S rRNA m2A2503 methyltransferase</fullName>
    </alternativeName>
    <alternativeName>
        <fullName evidence="1">Ribosomal RNA large subunit methyltransferase N</fullName>
    </alternativeName>
    <alternativeName>
        <fullName evidence="1">tRNA (adenine(37)-C(2))-methyltransferase</fullName>
    </alternativeName>
    <alternativeName>
        <fullName evidence="1">tRNA m2A37 methyltransferase</fullName>
    </alternativeName>
</protein>